<protein>
    <recommendedName>
        <fullName evidence="1">Succinyl-diaminopimelate desuccinylase</fullName>
        <shortName evidence="1">SDAP desuccinylase</shortName>
        <ecNumber evidence="1">3.5.1.18</ecNumber>
    </recommendedName>
    <alternativeName>
        <fullName evidence="1">N-succinyl-LL-2,6-diaminoheptanedioate amidohydrolase</fullName>
    </alternativeName>
</protein>
<sequence>MSRTLHLAEQLISRPSVTPDDAGCQALLIARLAPLGFKCETIVSGPEHFRVTNLWAKFEGFSPSAQAALAQPAIESIANTELSQAKVKTLVFAGHTDVVPTGPLAQWHSHPFTPSHRAGKLYGRGTADMKTSIAAMVVAVEEFLAAHPRPALSMAFLITSDEEGPGIDGTVVVCDRLLARGEVLDYCIVGEPTSVKQLGDMIKNGRRGTLSGKLSVKGVQGHIAYPHLAKNPIHLFAPALAELVATQWDQGNDFFPATSWQVSNIHAGTGASNVIPGDLVVDFNFRFCTESTPESLQQRLLAILSKHQFEYELKWTLGGLPFLTTPGTLVDAVRGAILAETGVQTELSTTGGTSDGRFIAKICPQVIELGPVNATIHQINECVDTASLDPLKNIYKGVLERLAGLA</sequence>
<organism>
    <name type="scientific">Polaromonas naphthalenivorans (strain CJ2)</name>
    <dbReference type="NCBI Taxonomy" id="365044"/>
    <lineage>
        <taxon>Bacteria</taxon>
        <taxon>Pseudomonadati</taxon>
        <taxon>Pseudomonadota</taxon>
        <taxon>Betaproteobacteria</taxon>
        <taxon>Burkholderiales</taxon>
        <taxon>Comamonadaceae</taxon>
        <taxon>Polaromonas</taxon>
    </lineage>
</organism>
<feature type="chain" id="PRO_0000375646" description="Succinyl-diaminopimelate desuccinylase">
    <location>
        <begin position="1"/>
        <end position="406"/>
    </location>
</feature>
<feature type="active site" evidence="1">
    <location>
        <position position="97"/>
    </location>
</feature>
<feature type="active site" description="Proton acceptor" evidence="1">
    <location>
        <position position="162"/>
    </location>
</feature>
<feature type="binding site" evidence="1">
    <location>
        <position position="95"/>
    </location>
    <ligand>
        <name>Zn(2+)</name>
        <dbReference type="ChEBI" id="CHEBI:29105"/>
        <label>1</label>
    </ligand>
</feature>
<feature type="binding site" evidence="1">
    <location>
        <position position="128"/>
    </location>
    <ligand>
        <name>Zn(2+)</name>
        <dbReference type="ChEBI" id="CHEBI:29105"/>
        <label>1</label>
    </ligand>
</feature>
<feature type="binding site" evidence="1">
    <location>
        <position position="128"/>
    </location>
    <ligand>
        <name>Zn(2+)</name>
        <dbReference type="ChEBI" id="CHEBI:29105"/>
        <label>2</label>
    </ligand>
</feature>
<feature type="binding site" evidence="1">
    <location>
        <position position="163"/>
    </location>
    <ligand>
        <name>Zn(2+)</name>
        <dbReference type="ChEBI" id="CHEBI:29105"/>
        <label>2</label>
    </ligand>
</feature>
<feature type="binding site" evidence="1">
    <location>
        <position position="191"/>
    </location>
    <ligand>
        <name>Zn(2+)</name>
        <dbReference type="ChEBI" id="CHEBI:29105"/>
        <label>1</label>
    </ligand>
</feature>
<feature type="binding site" evidence="1">
    <location>
        <position position="377"/>
    </location>
    <ligand>
        <name>Zn(2+)</name>
        <dbReference type="ChEBI" id="CHEBI:29105"/>
        <label>2</label>
    </ligand>
</feature>
<accession>A1VN92</accession>
<dbReference type="EC" id="3.5.1.18" evidence="1"/>
<dbReference type="EMBL" id="CP000529">
    <property type="protein sequence ID" value="ABM37120.1"/>
    <property type="molecule type" value="Genomic_DNA"/>
</dbReference>
<dbReference type="RefSeq" id="WP_011801201.1">
    <property type="nucleotide sequence ID" value="NC_008781.1"/>
</dbReference>
<dbReference type="SMR" id="A1VN92"/>
<dbReference type="STRING" id="365044.Pnap_1810"/>
<dbReference type="KEGG" id="pna:Pnap_1810"/>
<dbReference type="eggNOG" id="COG0624">
    <property type="taxonomic scope" value="Bacteria"/>
</dbReference>
<dbReference type="HOGENOM" id="CLU_021802_4_0_4"/>
<dbReference type="OrthoDB" id="9809784at2"/>
<dbReference type="UniPathway" id="UPA00034">
    <property type="reaction ID" value="UER00021"/>
</dbReference>
<dbReference type="Proteomes" id="UP000000644">
    <property type="component" value="Chromosome"/>
</dbReference>
<dbReference type="GO" id="GO:0008777">
    <property type="term" value="F:acetylornithine deacetylase activity"/>
    <property type="evidence" value="ECO:0007669"/>
    <property type="project" value="TreeGrafter"/>
</dbReference>
<dbReference type="GO" id="GO:0050897">
    <property type="term" value="F:cobalt ion binding"/>
    <property type="evidence" value="ECO:0007669"/>
    <property type="project" value="UniProtKB-UniRule"/>
</dbReference>
<dbReference type="GO" id="GO:0009014">
    <property type="term" value="F:succinyl-diaminopimelate desuccinylase activity"/>
    <property type="evidence" value="ECO:0007669"/>
    <property type="project" value="UniProtKB-UniRule"/>
</dbReference>
<dbReference type="GO" id="GO:0008270">
    <property type="term" value="F:zinc ion binding"/>
    <property type="evidence" value="ECO:0007669"/>
    <property type="project" value="UniProtKB-UniRule"/>
</dbReference>
<dbReference type="GO" id="GO:0019877">
    <property type="term" value="P:diaminopimelate biosynthetic process"/>
    <property type="evidence" value="ECO:0007669"/>
    <property type="project" value="UniProtKB-UniRule"/>
</dbReference>
<dbReference type="GO" id="GO:0006526">
    <property type="term" value="P:L-arginine biosynthetic process"/>
    <property type="evidence" value="ECO:0007669"/>
    <property type="project" value="TreeGrafter"/>
</dbReference>
<dbReference type="GO" id="GO:0009089">
    <property type="term" value="P:lysine biosynthetic process via diaminopimelate"/>
    <property type="evidence" value="ECO:0007669"/>
    <property type="project" value="UniProtKB-UniRule"/>
</dbReference>
<dbReference type="CDD" id="cd03891">
    <property type="entry name" value="M20_DapE_proteobac"/>
    <property type="match status" value="1"/>
</dbReference>
<dbReference type="FunFam" id="3.30.70.360:FF:000011">
    <property type="entry name" value="Succinyl-diaminopimelate desuccinylase"/>
    <property type="match status" value="1"/>
</dbReference>
<dbReference type="Gene3D" id="3.40.630.10">
    <property type="entry name" value="Zn peptidases"/>
    <property type="match status" value="2"/>
</dbReference>
<dbReference type="HAMAP" id="MF_01690">
    <property type="entry name" value="DapE"/>
    <property type="match status" value="1"/>
</dbReference>
<dbReference type="InterPro" id="IPR036264">
    <property type="entry name" value="Bact_exopeptidase_dim_dom"/>
</dbReference>
<dbReference type="InterPro" id="IPR005941">
    <property type="entry name" value="DapE_proteobac"/>
</dbReference>
<dbReference type="InterPro" id="IPR002933">
    <property type="entry name" value="Peptidase_M20"/>
</dbReference>
<dbReference type="InterPro" id="IPR011650">
    <property type="entry name" value="Peptidase_M20_dimer"/>
</dbReference>
<dbReference type="InterPro" id="IPR050072">
    <property type="entry name" value="Peptidase_M20A"/>
</dbReference>
<dbReference type="NCBIfam" id="TIGR01246">
    <property type="entry name" value="dapE_proteo"/>
    <property type="match status" value="1"/>
</dbReference>
<dbReference type="NCBIfam" id="NF009557">
    <property type="entry name" value="PRK13009.1"/>
    <property type="match status" value="1"/>
</dbReference>
<dbReference type="PANTHER" id="PTHR43808">
    <property type="entry name" value="ACETYLORNITHINE DEACETYLASE"/>
    <property type="match status" value="1"/>
</dbReference>
<dbReference type="PANTHER" id="PTHR43808:SF31">
    <property type="entry name" value="N-ACETYL-L-CITRULLINE DEACETYLASE"/>
    <property type="match status" value="1"/>
</dbReference>
<dbReference type="Pfam" id="PF07687">
    <property type="entry name" value="M20_dimer"/>
    <property type="match status" value="1"/>
</dbReference>
<dbReference type="Pfam" id="PF01546">
    <property type="entry name" value="Peptidase_M20"/>
    <property type="match status" value="1"/>
</dbReference>
<dbReference type="SUPFAM" id="SSF55031">
    <property type="entry name" value="Bacterial exopeptidase dimerisation domain"/>
    <property type="match status" value="1"/>
</dbReference>
<dbReference type="SUPFAM" id="SSF53187">
    <property type="entry name" value="Zn-dependent exopeptidases"/>
    <property type="match status" value="1"/>
</dbReference>
<comment type="function">
    <text evidence="1">Catalyzes the hydrolysis of N-succinyl-L,L-diaminopimelic acid (SDAP), forming succinate and LL-2,6-diaminopimelate (DAP), an intermediate involved in the bacterial biosynthesis of lysine and meso-diaminopimelic acid, an essential component of bacterial cell walls.</text>
</comment>
<comment type="catalytic activity">
    <reaction evidence="1">
        <text>N-succinyl-(2S,6S)-2,6-diaminopimelate + H2O = (2S,6S)-2,6-diaminopimelate + succinate</text>
        <dbReference type="Rhea" id="RHEA:22608"/>
        <dbReference type="ChEBI" id="CHEBI:15377"/>
        <dbReference type="ChEBI" id="CHEBI:30031"/>
        <dbReference type="ChEBI" id="CHEBI:57609"/>
        <dbReference type="ChEBI" id="CHEBI:58087"/>
        <dbReference type="EC" id="3.5.1.18"/>
    </reaction>
</comment>
<comment type="cofactor">
    <cofactor evidence="1">
        <name>Zn(2+)</name>
        <dbReference type="ChEBI" id="CHEBI:29105"/>
    </cofactor>
    <cofactor evidence="1">
        <name>Co(2+)</name>
        <dbReference type="ChEBI" id="CHEBI:48828"/>
    </cofactor>
    <text evidence="1">Binds 2 Zn(2+) or Co(2+) ions per subunit.</text>
</comment>
<comment type="pathway">
    <text evidence="1">Amino-acid biosynthesis; L-lysine biosynthesis via DAP pathway; LL-2,6-diaminopimelate from (S)-tetrahydrodipicolinate (succinylase route): step 3/3.</text>
</comment>
<comment type="subunit">
    <text evidence="1">Homodimer.</text>
</comment>
<comment type="similarity">
    <text evidence="1">Belongs to the peptidase M20A family. DapE subfamily.</text>
</comment>
<proteinExistence type="inferred from homology"/>
<keyword id="KW-0028">Amino-acid biosynthesis</keyword>
<keyword id="KW-0170">Cobalt</keyword>
<keyword id="KW-0220">Diaminopimelate biosynthesis</keyword>
<keyword id="KW-0378">Hydrolase</keyword>
<keyword id="KW-0457">Lysine biosynthesis</keyword>
<keyword id="KW-0479">Metal-binding</keyword>
<keyword id="KW-1185">Reference proteome</keyword>
<keyword id="KW-0862">Zinc</keyword>
<gene>
    <name evidence="1" type="primary">dapE</name>
    <name type="ordered locus">Pnap_1810</name>
</gene>
<name>DAPE_POLNA</name>
<evidence type="ECO:0000255" key="1">
    <source>
        <dbReference type="HAMAP-Rule" id="MF_01690"/>
    </source>
</evidence>
<reference key="1">
    <citation type="journal article" date="2009" name="Environ. Microbiol.">
        <title>The genome of Polaromonas naphthalenivorans strain CJ2, isolated from coal tar-contaminated sediment, reveals physiological and metabolic versatility and evolution through extensive horizontal gene transfer.</title>
        <authorList>
            <person name="Yagi J.M."/>
            <person name="Sims D."/>
            <person name="Brettin T."/>
            <person name="Bruce D."/>
            <person name="Madsen E.L."/>
        </authorList>
    </citation>
    <scope>NUCLEOTIDE SEQUENCE [LARGE SCALE GENOMIC DNA]</scope>
    <source>
        <strain>CJ2</strain>
    </source>
</reference>